<feature type="chain" id="PRO_1000034296" description="Transcription elongation factor GreA">
    <location>
        <begin position="1"/>
        <end position="156"/>
    </location>
</feature>
<feature type="coiled-coil region" evidence="1">
    <location>
        <begin position="46"/>
        <end position="66"/>
    </location>
</feature>
<accession>Q5LXA4</accession>
<gene>
    <name evidence="1" type="primary">greA</name>
    <name type="ordered locus">SPO0312</name>
</gene>
<dbReference type="EMBL" id="CP000031">
    <property type="protein sequence ID" value="AAV93630.1"/>
    <property type="molecule type" value="Genomic_DNA"/>
</dbReference>
<dbReference type="RefSeq" id="WP_011046073.1">
    <property type="nucleotide sequence ID" value="NC_003911.12"/>
</dbReference>
<dbReference type="SMR" id="Q5LXA4"/>
<dbReference type="STRING" id="246200.SPO0312"/>
<dbReference type="PaxDb" id="246200-SPO0312"/>
<dbReference type="KEGG" id="sil:SPO0312"/>
<dbReference type="eggNOG" id="COG0782">
    <property type="taxonomic scope" value="Bacteria"/>
</dbReference>
<dbReference type="HOGENOM" id="CLU_101379_2_0_5"/>
<dbReference type="OrthoDB" id="9808774at2"/>
<dbReference type="Proteomes" id="UP000001023">
    <property type="component" value="Chromosome"/>
</dbReference>
<dbReference type="GO" id="GO:0003677">
    <property type="term" value="F:DNA binding"/>
    <property type="evidence" value="ECO:0007669"/>
    <property type="project" value="UniProtKB-UniRule"/>
</dbReference>
<dbReference type="GO" id="GO:0070063">
    <property type="term" value="F:RNA polymerase binding"/>
    <property type="evidence" value="ECO:0007669"/>
    <property type="project" value="InterPro"/>
</dbReference>
<dbReference type="GO" id="GO:0006354">
    <property type="term" value="P:DNA-templated transcription elongation"/>
    <property type="evidence" value="ECO:0007669"/>
    <property type="project" value="TreeGrafter"/>
</dbReference>
<dbReference type="GO" id="GO:0032784">
    <property type="term" value="P:regulation of DNA-templated transcription elongation"/>
    <property type="evidence" value="ECO:0007669"/>
    <property type="project" value="UniProtKB-UniRule"/>
</dbReference>
<dbReference type="FunFam" id="1.10.287.180:FF:000001">
    <property type="entry name" value="Transcription elongation factor GreA"/>
    <property type="match status" value="1"/>
</dbReference>
<dbReference type="FunFam" id="3.10.50.30:FF:000001">
    <property type="entry name" value="Transcription elongation factor GreA"/>
    <property type="match status" value="1"/>
</dbReference>
<dbReference type="Gene3D" id="3.10.50.30">
    <property type="entry name" value="Transcription elongation factor, GreA/GreB, C-terminal domain"/>
    <property type="match status" value="1"/>
</dbReference>
<dbReference type="Gene3D" id="1.10.287.180">
    <property type="entry name" value="Transcription elongation factor, GreA/GreB, N-terminal domain"/>
    <property type="match status" value="1"/>
</dbReference>
<dbReference type="HAMAP" id="MF_00105">
    <property type="entry name" value="GreA_GreB"/>
    <property type="match status" value="1"/>
</dbReference>
<dbReference type="InterPro" id="IPR036953">
    <property type="entry name" value="GreA/GreB_C_sf"/>
</dbReference>
<dbReference type="InterPro" id="IPR018151">
    <property type="entry name" value="TF_GreA/GreB_CS"/>
</dbReference>
<dbReference type="InterPro" id="IPR006359">
    <property type="entry name" value="Tscrpt_elong_fac_GreA"/>
</dbReference>
<dbReference type="InterPro" id="IPR028624">
    <property type="entry name" value="Tscrpt_elong_fac_GreA/B"/>
</dbReference>
<dbReference type="InterPro" id="IPR001437">
    <property type="entry name" value="Tscrpt_elong_fac_GreA/B_C"/>
</dbReference>
<dbReference type="InterPro" id="IPR023459">
    <property type="entry name" value="Tscrpt_elong_fac_GreA/B_fam"/>
</dbReference>
<dbReference type="InterPro" id="IPR022691">
    <property type="entry name" value="Tscrpt_elong_fac_GreA/B_N"/>
</dbReference>
<dbReference type="InterPro" id="IPR036805">
    <property type="entry name" value="Tscrpt_elong_fac_GreA/B_N_sf"/>
</dbReference>
<dbReference type="NCBIfam" id="TIGR01462">
    <property type="entry name" value="greA"/>
    <property type="match status" value="1"/>
</dbReference>
<dbReference type="NCBIfam" id="NF001261">
    <property type="entry name" value="PRK00226.1-2"/>
    <property type="match status" value="1"/>
</dbReference>
<dbReference type="NCBIfam" id="NF001263">
    <property type="entry name" value="PRK00226.1-4"/>
    <property type="match status" value="1"/>
</dbReference>
<dbReference type="NCBIfam" id="NF001264">
    <property type="entry name" value="PRK00226.1-5"/>
    <property type="match status" value="1"/>
</dbReference>
<dbReference type="PANTHER" id="PTHR30437">
    <property type="entry name" value="TRANSCRIPTION ELONGATION FACTOR GREA"/>
    <property type="match status" value="1"/>
</dbReference>
<dbReference type="PANTHER" id="PTHR30437:SF4">
    <property type="entry name" value="TRANSCRIPTION ELONGATION FACTOR GREA"/>
    <property type="match status" value="1"/>
</dbReference>
<dbReference type="Pfam" id="PF01272">
    <property type="entry name" value="GreA_GreB"/>
    <property type="match status" value="1"/>
</dbReference>
<dbReference type="Pfam" id="PF03449">
    <property type="entry name" value="GreA_GreB_N"/>
    <property type="match status" value="1"/>
</dbReference>
<dbReference type="PIRSF" id="PIRSF006092">
    <property type="entry name" value="GreA_GreB"/>
    <property type="match status" value="1"/>
</dbReference>
<dbReference type="SUPFAM" id="SSF54534">
    <property type="entry name" value="FKBP-like"/>
    <property type="match status" value="1"/>
</dbReference>
<dbReference type="SUPFAM" id="SSF46557">
    <property type="entry name" value="GreA transcript cleavage protein, N-terminal domain"/>
    <property type="match status" value="1"/>
</dbReference>
<dbReference type="PROSITE" id="PS00829">
    <property type="entry name" value="GREAB_1"/>
    <property type="match status" value="1"/>
</dbReference>
<comment type="function">
    <text evidence="1">Necessary for efficient RNA polymerase transcription elongation past template-encoded arresting sites. The arresting sites in DNA have the property of trapping a certain fraction of elongating RNA polymerases that pass through, resulting in locked ternary complexes. Cleavage of the nascent transcript by cleavage factors such as GreA or GreB allows the resumption of elongation from the new 3'terminus. GreA releases sequences of 2 to 3 nucleotides.</text>
</comment>
<comment type="similarity">
    <text evidence="1">Belongs to the GreA/GreB family.</text>
</comment>
<organism>
    <name type="scientific">Ruegeria pomeroyi (strain ATCC 700808 / DSM 15171 / DSS-3)</name>
    <name type="common">Silicibacter pomeroyi</name>
    <dbReference type="NCBI Taxonomy" id="246200"/>
    <lineage>
        <taxon>Bacteria</taxon>
        <taxon>Pseudomonadati</taxon>
        <taxon>Pseudomonadota</taxon>
        <taxon>Alphaproteobacteria</taxon>
        <taxon>Rhodobacterales</taxon>
        <taxon>Roseobacteraceae</taxon>
        <taxon>Ruegeria</taxon>
    </lineage>
</organism>
<sequence>MEKIPMTPSGFAALEAELKQLKSVERPAIIKAIAEAREHGDLSENAEYHSAREKQSFIEGRIKELEGVLSLADVIDPTKLSGAIKFGARVTLVDEDTDEEKTWQIVGEHEANIEKGLLNIKSPIARALIGKDEGDSVEVKTPGGQKSYEILSIEYS</sequence>
<name>GREA_RUEPO</name>
<keyword id="KW-0175">Coiled coil</keyword>
<keyword id="KW-0238">DNA-binding</keyword>
<keyword id="KW-1185">Reference proteome</keyword>
<keyword id="KW-0804">Transcription</keyword>
<keyword id="KW-0805">Transcription regulation</keyword>
<reference key="1">
    <citation type="journal article" date="2004" name="Nature">
        <title>Genome sequence of Silicibacter pomeroyi reveals adaptations to the marine environment.</title>
        <authorList>
            <person name="Moran M.A."/>
            <person name="Buchan A."/>
            <person name="Gonzalez J.M."/>
            <person name="Heidelberg J.F."/>
            <person name="Whitman W.B."/>
            <person name="Kiene R.P."/>
            <person name="Henriksen J.R."/>
            <person name="King G.M."/>
            <person name="Belas R."/>
            <person name="Fuqua C."/>
            <person name="Brinkac L.M."/>
            <person name="Lewis M."/>
            <person name="Johri S."/>
            <person name="Weaver B."/>
            <person name="Pai G."/>
            <person name="Eisen J.A."/>
            <person name="Rahe E."/>
            <person name="Sheldon W.M."/>
            <person name="Ye W."/>
            <person name="Miller T.R."/>
            <person name="Carlton J."/>
            <person name="Rasko D.A."/>
            <person name="Paulsen I.T."/>
            <person name="Ren Q."/>
            <person name="Daugherty S.C."/>
            <person name="DeBoy R.T."/>
            <person name="Dodson R.J."/>
            <person name="Durkin A.S."/>
            <person name="Madupu R."/>
            <person name="Nelson W.C."/>
            <person name="Sullivan S.A."/>
            <person name="Rosovitz M.J."/>
            <person name="Haft D.H."/>
            <person name="Selengut J."/>
            <person name="Ward N."/>
        </authorList>
    </citation>
    <scope>NUCLEOTIDE SEQUENCE [LARGE SCALE GENOMIC DNA]</scope>
    <source>
        <strain>ATCC 700808 / DSM 15171 / DSS-3</strain>
    </source>
</reference>
<reference key="2">
    <citation type="journal article" date="2014" name="Stand. Genomic Sci.">
        <title>An updated genome annotation for the model marine bacterium Ruegeria pomeroyi DSS-3.</title>
        <authorList>
            <person name="Rivers A.R."/>
            <person name="Smith C.B."/>
            <person name="Moran M.A."/>
        </authorList>
    </citation>
    <scope>GENOME REANNOTATION</scope>
    <source>
        <strain>ATCC 700808 / DSM 15171 / DSS-3</strain>
    </source>
</reference>
<protein>
    <recommendedName>
        <fullName evidence="1">Transcription elongation factor GreA</fullName>
    </recommendedName>
    <alternativeName>
        <fullName evidence="1">Transcript cleavage factor GreA</fullName>
    </alternativeName>
</protein>
<evidence type="ECO:0000255" key="1">
    <source>
        <dbReference type="HAMAP-Rule" id="MF_00105"/>
    </source>
</evidence>
<proteinExistence type="inferred from homology"/>